<reference key="1">
    <citation type="journal article" date="2013" name="Nature">
        <title>The zebrafish reference genome sequence and its relationship to the human genome.</title>
        <authorList>
            <person name="Howe K."/>
            <person name="Clark M.D."/>
            <person name="Torroja C.F."/>
            <person name="Torrance J."/>
            <person name="Berthelot C."/>
            <person name="Muffato M."/>
            <person name="Collins J.E."/>
            <person name="Humphray S."/>
            <person name="McLaren K."/>
            <person name="Matthews L."/>
            <person name="McLaren S."/>
            <person name="Sealy I."/>
            <person name="Caccamo M."/>
            <person name="Churcher C."/>
            <person name="Scott C."/>
            <person name="Barrett J.C."/>
            <person name="Koch R."/>
            <person name="Rauch G.J."/>
            <person name="White S."/>
            <person name="Chow W."/>
            <person name="Kilian B."/>
            <person name="Quintais L.T."/>
            <person name="Guerra-Assuncao J.A."/>
            <person name="Zhou Y."/>
            <person name="Gu Y."/>
            <person name="Yen J."/>
            <person name="Vogel J.H."/>
            <person name="Eyre T."/>
            <person name="Redmond S."/>
            <person name="Banerjee R."/>
            <person name="Chi J."/>
            <person name="Fu B."/>
            <person name="Langley E."/>
            <person name="Maguire S.F."/>
            <person name="Laird G.K."/>
            <person name="Lloyd D."/>
            <person name="Kenyon E."/>
            <person name="Donaldson S."/>
            <person name="Sehra H."/>
            <person name="Almeida-King J."/>
            <person name="Loveland J."/>
            <person name="Trevanion S."/>
            <person name="Jones M."/>
            <person name="Quail M."/>
            <person name="Willey D."/>
            <person name="Hunt A."/>
            <person name="Burton J."/>
            <person name="Sims S."/>
            <person name="McLay K."/>
            <person name="Plumb B."/>
            <person name="Davis J."/>
            <person name="Clee C."/>
            <person name="Oliver K."/>
            <person name="Clark R."/>
            <person name="Riddle C."/>
            <person name="Elliot D."/>
            <person name="Threadgold G."/>
            <person name="Harden G."/>
            <person name="Ware D."/>
            <person name="Begum S."/>
            <person name="Mortimore B."/>
            <person name="Kerry G."/>
            <person name="Heath P."/>
            <person name="Phillimore B."/>
            <person name="Tracey A."/>
            <person name="Corby N."/>
            <person name="Dunn M."/>
            <person name="Johnson C."/>
            <person name="Wood J."/>
            <person name="Clark S."/>
            <person name="Pelan S."/>
            <person name="Griffiths G."/>
            <person name="Smith M."/>
            <person name="Glithero R."/>
            <person name="Howden P."/>
            <person name="Barker N."/>
            <person name="Lloyd C."/>
            <person name="Stevens C."/>
            <person name="Harley J."/>
            <person name="Holt K."/>
            <person name="Panagiotidis G."/>
            <person name="Lovell J."/>
            <person name="Beasley H."/>
            <person name="Henderson C."/>
            <person name="Gordon D."/>
            <person name="Auger K."/>
            <person name="Wright D."/>
            <person name="Collins J."/>
            <person name="Raisen C."/>
            <person name="Dyer L."/>
            <person name="Leung K."/>
            <person name="Robertson L."/>
            <person name="Ambridge K."/>
            <person name="Leongamornlert D."/>
            <person name="McGuire S."/>
            <person name="Gilderthorp R."/>
            <person name="Griffiths C."/>
            <person name="Manthravadi D."/>
            <person name="Nichol S."/>
            <person name="Barker G."/>
            <person name="Whitehead S."/>
            <person name="Kay M."/>
            <person name="Brown J."/>
            <person name="Murnane C."/>
            <person name="Gray E."/>
            <person name="Humphries M."/>
            <person name="Sycamore N."/>
            <person name="Barker D."/>
            <person name="Saunders D."/>
            <person name="Wallis J."/>
            <person name="Babbage A."/>
            <person name="Hammond S."/>
            <person name="Mashreghi-Mohammadi M."/>
            <person name="Barr L."/>
            <person name="Martin S."/>
            <person name="Wray P."/>
            <person name="Ellington A."/>
            <person name="Matthews N."/>
            <person name="Ellwood M."/>
            <person name="Woodmansey R."/>
            <person name="Clark G."/>
            <person name="Cooper J."/>
            <person name="Tromans A."/>
            <person name="Grafham D."/>
            <person name="Skuce C."/>
            <person name="Pandian R."/>
            <person name="Andrews R."/>
            <person name="Harrison E."/>
            <person name="Kimberley A."/>
            <person name="Garnett J."/>
            <person name="Fosker N."/>
            <person name="Hall R."/>
            <person name="Garner P."/>
            <person name="Kelly D."/>
            <person name="Bird C."/>
            <person name="Palmer S."/>
            <person name="Gehring I."/>
            <person name="Berger A."/>
            <person name="Dooley C.M."/>
            <person name="Ersan-Urun Z."/>
            <person name="Eser C."/>
            <person name="Geiger H."/>
            <person name="Geisler M."/>
            <person name="Karotki L."/>
            <person name="Kirn A."/>
            <person name="Konantz J."/>
            <person name="Konantz M."/>
            <person name="Oberlander M."/>
            <person name="Rudolph-Geiger S."/>
            <person name="Teucke M."/>
            <person name="Lanz C."/>
            <person name="Raddatz G."/>
            <person name="Osoegawa K."/>
            <person name="Zhu B."/>
            <person name="Rapp A."/>
            <person name="Widaa S."/>
            <person name="Langford C."/>
            <person name="Yang F."/>
            <person name="Schuster S.C."/>
            <person name="Carter N.P."/>
            <person name="Harrow J."/>
            <person name="Ning Z."/>
            <person name="Herrero J."/>
            <person name="Searle S.M."/>
            <person name="Enright A."/>
            <person name="Geisler R."/>
            <person name="Plasterk R.H."/>
            <person name="Lee C."/>
            <person name="Westerfield M."/>
            <person name="de Jong P.J."/>
            <person name="Zon L.I."/>
            <person name="Postlethwait J.H."/>
            <person name="Nusslein-Volhard C."/>
            <person name="Hubbard T.J."/>
            <person name="Roest Crollius H."/>
            <person name="Rogers J."/>
            <person name="Stemple D.L."/>
        </authorList>
    </citation>
    <scope>NUCLEOTIDE SEQUENCE [LARGE SCALE GENOMIC DNA]</scope>
    <source>
        <strain>Tuebingen</strain>
    </source>
</reference>
<sequence>MAPTHVLRCCQRGLAWIPVIFIALVVCWSYYAYVVELCLLVYLVVFHLSFVMFVWSYWKTIFTKPANPSKEFCLPKSEKEQYEKEQRPETQQEILKKVATSLPLYTRTGAGAIRYCDRCQVIKPDRCHHCSACDMCVLKMDHHCPWVNNCVGFSNYKFFILFLTYSLVYCLFIAASVLQYFIKFWTSDLPESHAKFHVLFLFFVAAMFCISILSLFTYHLWLVGKNRSTIEAFRAPVFRNGPDKNGFSLGFSKNIAQVFGDEKKYWLLPVFTSQGDGLSFPTRLVTIDPEQPTECLQPGGAISSLIIVEYCFCKQAKKKKTDE</sequence>
<gene>
    <name type="primary">zdhhc20b</name>
</gene>
<comment type="function">
    <text evidence="1">Palmitoyltransferase that could catalyze the addition of palmitate onto various protein substrates. Catalyzes palmitoylation of Cys residues on protein substrates and has a preference for acyl-CoA with C16 fatty acid chains but may also utilize acyl-CoA with C14 and C18 fatty acid chains.</text>
</comment>
<comment type="catalytic activity">
    <reaction evidence="1">
        <text>L-cysteinyl-[protein] + hexadecanoyl-CoA = S-hexadecanoyl-L-cysteinyl-[protein] + CoA</text>
        <dbReference type="Rhea" id="RHEA:36683"/>
        <dbReference type="Rhea" id="RHEA-COMP:10131"/>
        <dbReference type="Rhea" id="RHEA-COMP:11032"/>
        <dbReference type="ChEBI" id="CHEBI:29950"/>
        <dbReference type="ChEBI" id="CHEBI:57287"/>
        <dbReference type="ChEBI" id="CHEBI:57379"/>
        <dbReference type="ChEBI" id="CHEBI:74151"/>
        <dbReference type="EC" id="2.3.1.225"/>
    </reaction>
    <physiologicalReaction direction="left-to-right" evidence="1">
        <dbReference type="Rhea" id="RHEA:36684"/>
    </physiologicalReaction>
</comment>
<comment type="catalytic activity">
    <reaction evidence="1">
        <text>L-cysteinyl-[protein] + tetradecanoyl-CoA = S-tetradecanoyl-L-cysteinyl-[protein] + CoA</text>
        <dbReference type="Rhea" id="RHEA:59736"/>
        <dbReference type="Rhea" id="RHEA-COMP:10131"/>
        <dbReference type="Rhea" id="RHEA-COMP:15433"/>
        <dbReference type="ChEBI" id="CHEBI:29950"/>
        <dbReference type="ChEBI" id="CHEBI:57287"/>
        <dbReference type="ChEBI" id="CHEBI:57385"/>
        <dbReference type="ChEBI" id="CHEBI:143199"/>
    </reaction>
    <physiologicalReaction direction="left-to-right" evidence="1">
        <dbReference type="Rhea" id="RHEA:59737"/>
    </physiologicalReaction>
</comment>
<comment type="catalytic activity">
    <reaction evidence="1">
        <text>L-cysteinyl-[protein] + octadecanoyl-CoA = S-octadecanoyl-L-cysteinyl-[protein] + CoA</text>
        <dbReference type="Rhea" id="RHEA:59740"/>
        <dbReference type="Rhea" id="RHEA-COMP:10131"/>
        <dbReference type="Rhea" id="RHEA-COMP:15434"/>
        <dbReference type="ChEBI" id="CHEBI:29950"/>
        <dbReference type="ChEBI" id="CHEBI:57287"/>
        <dbReference type="ChEBI" id="CHEBI:57394"/>
        <dbReference type="ChEBI" id="CHEBI:143200"/>
    </reaction>
    <physiologicalReaction direction="left-to-right" evidence="1">
        <dbReference type="Rhea" id="RHEA:59741"/>
    </physiologicalReaction>
</comment>
<comment type="subcellular location">
    <subcellularLocation>
        <location evidence="1">Golgi apparatus membrane</location>
        <topology evidence="1">Multi-pass membrane protein</topology>
    </subcellularLocation>
    <subcellularLocation>
        <location evidence="1">Cell membrane</location>
        <topology evidence="1">Multi-pass membrane protein</topology>
    </subcellularLocation>
    <subcellularLocation>
        <location evidence="1">Cytoplasm</location>
        <location evidence="1">Perinuclear region</location>
    </subcellularLocation>
    <subcellularLocation>
        <location evidence="1">Endoplasmic reticulum membrane</location>
        <topology evidence="2">Multi-pass membrane protein</topology>
    </subcellularLocation>
    <subcellularLocation>
        <location evidence="1">Endoplasmic reticulum-Golgi intermediate compartment membrane</location>
        <topology evidence="2">Multi-pass membrane protein</topology>
    </subcellularLocation>
</comment>
<comment type="domain">
    <text evidence="1">The DHHC domain is required for palmitoyltransferase activity.</text>
</comment>
<comment type="similarity">
    <text evidence="4">Belongs to the DHHC palmitoyltransferase family.</text>
</comment>
<accession>E7F587</accession>
<protein>
    <recommendedName>
        <fullName evidence="4">Palmitoyltransferase ZDHHC20-B</fullName>
        <ecNumber evidence="1">2.3.1.225</ecNumber>
    </recommendedName>
    <alternativeName>
        <fullName evidence="1">Acyltransferase ZDHHC20-B</fullName>
        <ecNumber evidence="1">2.3.1.-</ecNumber>
    </alternativeName>
    <alternativeName>
        <fullName>Zinc finger DHHC domain-containing protein 20-B</fullName>
    </alternativeName>
</protein>
<keyword id="KW-0012">Acyltransferase</keyword>
<keyword id="KW-1003">Cell membrane</keyword>
<keyword id="KW-0963">Cytoplasm</keyword>
<keyword id="KW-0256">Endoplasmic reticulum</keyword>
<keyword id="KW-0333">Golgi apparatus</keyword>
<keyword id="KW-0449">Lipoprotein</keyword>
<keyword id="KW-0472">Membrane</keyword>
<keyword id="KW-0479">Metal-binding</keyword>
<keyword id="KW-0564">Palmitate</keyword>
<keyword id="KW-0597">Phosphoprotein</keyword>
<keyword id="KW-1185">Reference proteome</keyword>
<keyword id="KW-0808">Transferase</keyword>
<keyword id="KW-0812">Transmembrane</keyword>
<keyword id="KW-1133">Transmembrane helix</keyword>
<keyword id="KW-0862">Zinc</keyword>
<feature type="chain" id="PRO_0000451128" description="Palmitoyltransferase ZDHHC20-B">
    <location>
        <begin position="1"/>
        <end position="323"/>
    </location>
</feature>
<feature type="topological domain" description="Cytoplasmic" evidence="1">
    <location>
        <begin position="1"/>
        <end position="14"/>
    </location>
</feature>
<feature type="transmembrane region" description="Helical" evidence="1">
    <location>
        <begin position="15"/>
        <end position="35"/>
    </location>
</feature>
<feature type="topological domain" description="Lumenal" evidence="1">
    <location>
        <begin position="36"/>
        <end position="41"/>
    </location>
</feature>
<feature type="transmembrane region" description="Helical" evidence="1">
    <location>
        <begin position="42"/>
        <end position="62"/>
    </location>
</feature>
<feature type="topological domain" description="Cytoplasmic" evidence="1">
    <location>
        <begin position="63"/>
        <end position="157"/>
    </location>
</feature>
<feature type="transmembrane region" description="Helical" evidence="1">
    <location>
        <begin position="158"/>
        <end position="178"/>
    </location>
</feature>
<feature type="topological domain" description="Lumenal" evidence="1">
    <location>
        <begin position="179"/>
        <end position="195"/>
    </location>
</feature>
<feature type="transmembrane region" description="Helical" evidence="1">
    <location>
        <begin position="196"/>
        <end position="219"/>
    </location>
</feature>
<feature type="topological domain" description="Cytoplasmic" evidence="1">
    <location>
        <begin position="220"/>
        <end position="323"/>
    </location>
</feature>
<feature type="domain" description="DHHC" evidence="3">
    <location>
        <begin position="114"/>
        <end position="164"/>
    </location>
</feature>
<feature type="active site" description="S-palmitoyl cysteine intermediate" evidence="3">
    <location>
        <position position="144"/>
    </location>
</feature>
<proteinExistence type="inferred from homology"/>
<name>ZD20B_DANRE</name>
<organism>
    <name type="scientific">Danio rerio</name>
    <name type="common">Zebrafish</name>
    <name type="synonym">Brachydanio rerio</name>
    <dbReference type="NCBI Taxonomy" id="7955"/>
    <lineage>
        <taxon>Eukaryota</taxon>
        <taxon>Metazoa</taxon>
        <taxon>Chordata</taxon>
        <taxon>Craniata</taxon>
        <taxon>Vertebrata</taxon>
        <taxon>Euteleostomi</taxon>
        <taxon>Actinopterygii</taxon>
        <taxon>Neopterygii</taxon>
        <taxon>Teleostei</taxon>
        <taxon>Ostariophysi</taxon>
        <taxon>Cypriniformes</taxon>
        <taxon>Danionidae</taxon>
        <taxon>Danioninae</taxon>
        <taxon>Danio</taxon>
    </lineage>
</organism>
<evidence type="ECO:0000250" key="1">
    <source>
        <dbReference type="UniProtKB" id="Q5W0Z9"/>
    </source>
</evidence>
<evidence type="ECO:0000255" key="2"/>
<evidence type="ECO:0000255" key="3">
    <source>
        <dbReference type="PROSITE-ProRule" id="PRU00067"/>
    </source>
</evidence>
<evidence type="ECO:0000305" key="4"/>
<dbReference type="EC" id="2.3.1.225" evidence="1"/>
<dbReference type="EC" id="2.3.1.-" evidence="1"/>
<dbReference type="EMBL" id="CR383672">
    <property type="status" value="NOT_ANNOTATED_CDS"/>
    <property type="molecule type" value="Genomic_DNA"/>
</dbReference>
<dbReference type="SMR" id="E7F587"/>
<dbReference type="FunCoup" id="E7F587">
    <property type="interactions" value="1698"/>
</dbReference>
<dbReference type="Ensembl" id="ENSDART00000080997">
    <property type="protein sequence ID" value="ENSDARP00000075441"/>
    <property type="gene ID" value="ENSDARG00000058178"/>
</dbReference>
<dbReference type="eggNOG" id="KOG1315">
    <property type="taxonomic scope" value="Eukaryota"/>
</dbReference>
<dbReference type="InParanoid" id="E7F587"/>
<dbReference type="TreeFam" id="TF316044"/>
<dbReference type="Proteomes" id="UP000000437">
    <property type="component" value="Unplaced"/>
</dbReference>
<dbReference type="Bgee" id="ENSDARG00000058178">
    <property type="expression patterns" value="Expressed in early embryo and 20 other cell types or tissues"/>
</dbReference>
<dbReference type="ExpressionAtlas" id="E7F587">
    <property type="expression patterns" value="baseline"/>
</dbReference>
<dbReference type="GO" id="GO:0005789">
    <property type="term" value="C:endoplasmic reticulum membrane"/>
    <property type="evidence" value="ECO:0007669"/>
    <property type="project" value="UniProtKB-SubCell"/>
</dbReference>
<dbReference type="GO" id="GO:0033116">
    <property type="term" value="C:endoplasmic reticulum-Golgi intermediate compartment membrane"/>
    <property type="evidence" value="ECO:0007669"/>
    <property type="project" value="UniProtKB-SubCell"/>
</dbReference>
<dbReference type="GO" id="GO:0000139">
    <property type="term" value="C:Golgi membrane"/>
    <property type="evidence" value="ECO:0007669"/>
    <property type="project" value="UniProtKB-SubCell"/>
</dbReference>
<dbReference type="GO" id="GO:0048471">
    <property type="term" value="C:perinuclear region of cytoplasm"/>
    <property type="evidence" value="ECO:0007669"/>
    <property type="project" value="UniProtKB-SubCell"/>
</dbReference>
<dbReference type="GO" id="GO:0005886">
    <property type="term" value="C:plasma membrane"/>
    <property type="evidence" value="ECO:0007669"/>
    <property type="project" value="UniProtKB-SubCell"/>
</dbReference>
<dbReference type="GO" id="GO:0046872">
    <property type="term" value="F:metal ion binding"/>
    <property type="evidence" value="ECO:0007669"/>
    <property type="project" value="UniProtKB-KW"/>
</dbReference>
<dbReference type="GO" id="GO:0019705">
    <property type="term" value="F:protein-cysteine S-myristoyltransferase activity"/>
    <property type="evidence" value="ECO:0007669"/>
    <property type="project" value="RHEA"/>
</dbReference>
<dbReference type="GO" id="GO:0019706">
    <property type="term" value="F:protein-cysteine S-palmitoyltransferase activity"/>
    <property type="evidence" value="ECO:0000250"/>
    <property type="project" value="UniProtKB"/>
</dbReference>
<dbReference type="GO" id="GO:0140439">
    <property type="term" value="F:protein-cysteine S-stearoyltransferase activity"/>
    <property type="evidence" value="ECO:0007669"/>
    <property type="project" value="RHEA"/>
</dbReference>
<dbReference type="GO" id="GO:0018345">
    <property type="term" value="P:protein palmitoylation"/>
    <property type="evidence" value="ECO:0000250"/>
    <property type="project" value="UniProtKB"/>
</dbReference>
<dbReference type="InterPro" id="IPR001594">
    <property type="entry name" value="Palmitoyltrfase_DHHC"/>
</dbReference>
<dbReference type="InterPro" id="IPR039859">
    <property type="entry name" value="PFA4/ZDH16/20/ERF2-like"/>
</dbReference>
<dbReference type="PANTHER" id="PTHR12246">
    <property type="entry name" value="PALMITOYLTRANSFERASE ZDHHC16"/>
    <property type="match status" value="1"/>
</dbReference>
<dbReference type="Pfam" id="PF01529">
    <property type="entry name" value="DHHC"/>
    <property type="match status" value="1"/>
</dbReference>
<dbReference type="PROSITE" id="PS50216">
    <property type="entry name" value="DHHC"/>
    <property type="match status" value="1"/>
</dbReference>